<dbReference type="EC" id="2.6.1.21"/>
<dbReference type="EMBL" id="AL596169">
    <property type="protein sequence ID" value="CAC96891.1"/>
    <property type="molecule type" value="Genomic_DNA"/>
</dbReference>
<dbReference type="PIR" id="AC1640">
    <property type="entry name" value="AC1640"/>
</dbReference>
<dbReference type="RefSeq" id="WP_003762500.1">
    <property type="nucleotide sequence ID" value="NC_003212.1"/>
</dbReference>
<dbReference type="SMR" id="Q92B90"/>
<dbReference type="STRING" id="272626.gene:17565991"/>
<dbReference type="GeneID" id="93235042"/>
<dbReference type="KEGG" id="lin:daaA"/>
<dbReference type="eggNOG" id="COG0115">
    <property type="taxonomic scope" value="Bacteria"/>
</dbReference>
<dbReference type="HOGENOM" id="CLU_020844_4_1_9"/>
<dbReference type="OrthoDB" id="9805628at2"/>
<dbReference type="Proteomes" id="UP000002513">
    <property type="component" value="Chromosome"/>
</dbReference>
<dbReference type="GO" id="GO:0005829">
    <property type="term" value="C:cytosol"/>
    <property type="evidence" value="ECO:0007669"/>
    <property type="project" value="TreeGrafter"/>
</dbReference>
<dbReference type="GO" id="GO:0047810">
    <property type="term" value="F:D-alanine-2-oxoglutarate aminotransferase activity"/>
    <property type="evidence" value="ECO:0000250"/>
    <property type="project" value="UniProtKB"/>
</dbReference>
<dbReference type="GO" id="GO:0030170">
    <property type="term" value="F:pyridoxal phosphate binding"/>
    <property type="evidence" value="ECO:0000250"/>
    <property type="project" value="UniProtKB"/>
</dbReference>
<dbReference type="GO" id="GO:0046437">
    <property type="term" value="P:D-amino acid biosynthetic process"/>
    <property type="evidence" value="ECO:0000250"/>
    <property type="project" value="UniProtKB"/>
</dbReference>
<dbReference type="GO" id="GO:0019478">
    <property type="term" value="P:D-amino acid catabolic process"/>
    <property type="evidence" value="ECO:0000250"/>
    <property type="project" value="UniProtKB"/>
</dbReference>
<dbReference type="CDD" id="cd01558">
    <property type="entry name" value="D-AAT_like"/>
    <property type="match status" value="1"/>
</dbReference>
<dbReference type="FunFam" id="3.20.10.10:FF:000002">
    <property type="entry name" value="D-alanine aminotransferase"/>
    <property type="match status" value="1"/>
</dbReference>
<dbReference type="FunFam" id="3.30.470.10:FF:000009">
    <property type="entry name" value="D-alanine aminotransferase"/>
    <property type="match status" value="1"/>
</dbReference>
<dbReference type="Gene3D" id="3.30.470.10">
    <property type="match status" value="1"/>
</dbReference>
<dbReference type="Gene3D" id="3.20.10.10">
    <property type="entry name" value="D-amino Acid Aminotransferase, subunit A, domain 2"/>
    <property type="match status" value="1"/>
</dbReference>
<dbReference type="InterPro" id="IPR001544">
    <property type="entry name" value="Aminotrans_IV"/>
</dbReference>
<dbReference type="InterPro" id="IPR036038">
    <property type="entry name" value="Aminotransferase-like"/>
</dbReference>
<dbReference type="InterPro" id="IPR043132">
    <property type="entry name" value="BCAT-like_C"/>
</dbReference>
<dbReference type="InterPro" id="IPR043131">
    <property type="entry name" value="BCAT-like_N"/>
</dbReference>
<dbReference type="InterPro" id="IPR050571">
    <property type="entry name" value="Class-IV_PLP-Dep_Aminotrnsfr"/>
</dbReference>
<dbReference type="InterPro" id="IPR005784">
    <property type="entry name" value="D_amino_transT"/>
</dbReference>
<dbReference type="NCBIfam" id="TIGR01121">
    <property type="entry name" value="D_amino_aminoT"/>
    <property type="match status" value="1"/>
</dbReference>
<dbReference type="PANTHER" id="PTHR42743">
    <property type="entry name" value="AMINO-ACID AMINOTRANSFERASE"/>
    <property type="match status" value="1"/>
</dbReference>
<dbReference type="PANTHER" id="PTHR42743:SF10">
    <property type="entry name" value="D-ALANINE AMINOTRANSFERASE"/>
    <property type="match status" value="1"/>
</dbReference>
<dbReference type="Pfam" id="PF01063">
    <property type="entry name" value="Aminotran_4"/>
    <property type="match status" value="1"/>
</dbReference>
<dbReference type="SUPFAM" id="SSF56752">
    <property type="entry name" value="D-aminoacid aminotransferase-like PLP-dependent enzymes"/>
    <property type="match status" value="1"/>
</dbReference>
<keyword id="KW-0032">Aminotransferase</keyword>
<keyword id="KW-0663">Pyridoxal phosphate</keyword>
<keyword id="KW-0808">Transferase</keyword>
<comment type="function">
    <text evidence="1">Acts on the D-isomers of alanine, leucine, aspartate, glutamate, aminobutyrate, norvaline and asparagine. The enzyme transfers an amino group from a substrate D-amino acid to the pyridoxal phosphate cofactor to form pyridoxamine and an alpha-keto acid in the first half-reaction. The second half-reaction is the reverse of the first, transferring the amino group from the pyridoxamine to a second alpha-keto acid to form the product D-amino acid via a ping-pong mechanism. This is an important process in the formation of D-alanine and D-glutamate, which are essential bacterial cell wall components (By similarity).</text>
</comment>
<comment type="catalytic activity">
    <reaction>
        <text>D-alanine + 2-oxoglutarate = D-glutamate + pyruvate</text>
        <dbReference type="Rhea" id="RHEA:15869"/>
        <dbReference type="ChEBI" id="CHEBI:15361"/>
        <dbReference type="ChEBI" id="CHEBI:16810"/>
        <dbReference type="ChEBI" id="CHEBI:29986"/>
        <dbReference type="ChEBI" id="CHEBI:57416"/>
        <dbReference type="EC" id="2.6.1.21"/>
    </reaction>
</comment>
<comment type="cofactor">
    <cofactor evidence="1">
        <name>pyridoxal 5'-phosphate</name>
        <dbReference type="ChEBI" id="CHEBI:597326"/>
    </cofactor>
</comment>
<comment type="subunit">
    <text evidence="1">Homodimer.</text>
</comment>
<comment type="similarity">
    <text evidence="3">Belongs to the class-IV pyridoxal-phosphate-dependent aminotransferase family.</text>
</comment>
<organism>
    <name type="scientific">Listeria innocua serovar 6a (strain ATCC BAA-680 / CLIP 11262)</name>
    <dbReference type="NCBI Taxonomy" id="272626"/>
    <lineage>
        <taxon>Bacteria</taxon>
        <taxon>Bacillati</taxon>
        <taxon>Bacillota</taxon>
        <taxon>Bacilli</taxon>
        <taxon>Bacillales</taxon>
        <taxon>Listeriaceae</taxon>
        <taxon>Listeria</taxon>
    </lineage>
</organism>
<feature type="chain" id="PRO_0000103250" description="D-alanine aminotransferase">
    <location>
        <begin position="1"/>
        <end position="289"/>
    </location>
</feature>
<feature type="active site" description="Proton acceptor" evidence="2">
    <location>
        <position position="147"/>
    </location>
</feature>
<feature type="binding site" evidence="2">
    <location>
        <position position="31"/>
    </location>
    <ligand>
        <name>substrate</name>
    </ligand>
</feature>
<feature type="binding site" evidence="2">
    <location>
        <position position="50"/>
    </location>
    <ligand>
        <name>pyridoxal 5'-phosphate</name>
        <dbReference type="ChEBI" id="CHEBI:597326"/>
    </ligand>
</feature>
<feature type="binding site" evidence="2">
    <location>
        <position position="99"/>
    </location>
    <ligand>
        <name>substrate</name>
    </ligand>
</feature>
<feature type="binding site" evidence="2">
    <location>
        <position position="101"/>
    </location>
    <ligand>
        <name>substrate</name>
    </ligand>
</feature>
<feature type="binding site" evidence="2">
    <location>
        <position position="179"/>
    </location>
    <ligand>
        <name>pyridoxal 5'-phosphate</name>
        <dbReference type="ChEBI" id="CHEBI:597326"/>
    </ligand>
</feature>
<feature type="modified residue" description="N6-(pyridoxal phosphate)lysine" evidence="2">
    <location>
        <position position="147"/>
    </location>
</feature>
<evidence type="ECO:0000250" key="1"/>
<evidence type="ECO:0000250" key="2">
    <source>
        <dbReference type="UniProtKB" id="P19938"/>
    </source>
</evidence>
<evidence type="ECO:0000305" key="3"/>
<name>DAAA_LISIN</name>
<reference key="1">
    <citation type="journal article" date="2001" name="Science">
        <title>Comparative genomics of Listeria species.</title>
        <authorList>
            <person name="Glaser P."/>
            <person name="Frangeul L."/>
            <person name="Buchrieser C."/>
            <person name="Rusniok C."/>
            <person name="Amend A."/>
            <person name="Baquero F."/>
            <person name="Berche P."/>
            <person name="Bloecker H."/>
            <person name="Brandt P."/>
            <person name="Chakraborty T."/>
            <person name="Charbit A."/>
            <person name="Chetouani F."/>
            <person name="Couve E."/>
            <person name="de Daruvar A."/>
            <person name="Dehoux P."/>
            <person name="Domann E."/>
            <person name="Dominguez-Bernal G."/>
            <person name="Duchaud E."/>
            <person name="Durant L."/>
            <person name="Dussurget O."/>
            <person name="Entian K.-D."/>
            <person name="Fsihi H."/>
            <person name="Garcia-del Portillo F."/>
            <person name="Garrido P."/>
            <person name="Gautier L."/>
            <person name="Goebel W."/>
            <person name="Gomez-Lopez N."/>
            <person name="Hain T."/>
            <person name="Hauf J."/>
            <person name="Jackson D."/>
            <person name="Jones L.-M."/>
            <person name="Kaerst U."/>
            <person name="Kreft J."/>
            <person name="Kuhn M."/>
            <person name="Kunst F."/>
            <person name="Kurapkat G."/>
            <person name="Madueno E."/>
            <person name="Maitournam A."/>
            <person name="Mata Vicente J."/>
            <person name="Ng E."/>
            <person name="Nedjari H."/>
            <person name="Nordsiek G."/>
            <person name="Novella S."/>
            <person name="de Pablos B."/>
            <person name="Perez-Diaz J.-C."/>
            <person name="Purcell R."/>
            <person name="Remmel B."/>
            <person name="Rose M."/>
            <person name="Schlueter T."/>
            <person name="Simoes N."/>
            <person name="Tierrez A."/>
            <person name="Vazquez-Boland J.-A."/>
            <person name="Voss H."/>
            <person name="Wehland J."/>
            <person name="Cossart P."/>
        </authorList>
    </citation>
    <scope>NUCLEOTIDE SEQUENCE [LARGE SCALE GENOMIC DNA]</scope>
    <source>
        <strain>ATCC BAA-680 / CLIP 11262</strain>
    </source>
</reference>
<accession>Q92B90</accession>
<sequence length="289" mass="32324">MKVLVNDRLVERNDATVDVEDRGYQFGDGVYEVVRLYNGKFFTYNEHIDRLYASAAKIDLVIPYSKETLRALLDKLVAENNINTGNVYLQVTRGVQNPRNHVLPDDFPLEGVLTAAAREVPRNERQFIEGGSAITEEDVRWLRCDIKSLNLLGNILAKNKAHQQNALEAILHRGEQVTECSASNVSIIKDGVLWTHAADNLILNGITRQVIIDVAKKNGIPVKEADFTLTDLREADEVFISSTTIEITPITHIDGVQVADGKRGPITAQLHNYFVEEIVRACGELEYAK</sequence>
<protein>
    <recommendedName>
        <fullName>D-alanine aminotransferase</fullName>
        <ecNumber>2.6.1.21</ecNumber>
    </recommendedName>
    <alternativeName>
        <fullName>D-amino acid aminotransferase</fullName>
    </alternativeName>
    <alternativeName>
        <fullName>D-amino acid transaminase</fullName>
        <shortName>DAAT</shortName>
    </alternativeName>
    <alternativeName>
        <fullName>D-aspartate aminotransferase</fullName>
    </alternativeName>
</protein>
<proteinExistence type="inferred from homology"/>
<gene>
    <name type="primary">dat</name>
    <name type="synonym">daaA</name>
    <name type="ordered locus">lin1660</name>
</gene>